<proteinExistence type="evidence at protein level"/>
<accession>O34829</accession>
<accession>Q795R0</accession>
<evidence type="ECO:0000255" key="1">
    <source>
        <dbReference type="PROSITE-ProRule" id="PRU00111"/>
    </source>
</evidence>
<evidence type="ECO:0000269" key="2">
    <source>
    </source>
</evidence>
<evidence type="ECO:0000303" key="3">
    <source>
    </source>
</evidence>
<evidence type="ECO:0000305" key="4"/>
<evidence type="ECO:0000305" key="5">
    <source>
    </source>
</evidence>
<feature type="chain" id="PRO_0000360707" description="HTH-type transcriptional repressor MelR">
    <location>
        <begin position="1"/>
        <end position="344"/>
    </location>
</feature>
<feature type="domain" description="HTH lacI-type" evidence="1">
    <location>
        <begin position="2"/>
        <end position="58"/>
    </location>
</feature>
<feature type="DNA-binding region" description="H-T-H motif" evidence="1">
    <location>
        <begin position="4"/>
        <end position="23"/>
    </location>
</feature>
<reference key="1">
    <citation type="journal article" date="1997" name="Microbiology">
        <title>Sequencing and functional annotation of the Bacillus subtilis genes in the 200 kb rrnB-dnaB region.</title>
        <authorList>
            <person name="Lapidus A."/>
            <person name="Galleron N."/>
            <person name="Sorokin A."/>
            <person name="Ehrlich S.D."/>
        </authorList>
    </citation>
    <scope>NUCLEOTIDE SEQUENCE [GENOMIC DNA]</scope>
    <source>
        <strain>168</strain>
    </source>
</reference>
<reference key="2">
    <citation type="journal article" date="1997" name="Nature">
        <title>The complete genome sequence of the Gram-positive bacterium Bacillus subtilis.</title>
        <authorList>
            <person name="Kunst F."/>
            <person name="Ogasawara N."/>
            <person name="Moszer I."/>
            <person name="Albertini A.M."/>
            <person name="Alloni G."/>
            <person name="Azevedo V."/>
            <person name="Bertero M.G."/>
            <person name="Bessieres P."/>
            <person name="Bolotin A."/>
            <person name="Borchert S."/>
            <person name="Borriss R."/>
            <person name="Boursier L."/>
            <person name="Brans A."/>
            <person name="Braun M."/>
            <person name="Brignell S.C."/>
            <person name="Bron S."/>
            <person name="Brouillet S."/>
            <person name="Bruschi C.V."/>
            <person name="Caldwell B."/>
            <person name="Capuano V."/>
            <person name="Carter N.M."/>
            <person name="Choi S.-K."/>
            <person name="Codani J.-J."/>
            <person name="Connerton I.F."/>
            <person name="Cummings N.J."/>
            <person name="Daniel R.A."/>
            <person name="Denizot F."/>
            <person name="Devine K.M."/>
            <person name="Duesterhoeft A."/>
            <person name="Ehrlich S.D."/>
            <person name="Emmerson P.T."/>
            <person name="Entian K.-D."/>
            <person name="Errington J."/>
            <person name="Fabret C."/>
            <person name="Ferrari E."/>
            <person name="Foulger D."/>
            <person name="Fritz C."/>
            <person name="Fujita M."/>
            <person name="Fujita Y."/>
            <person name="Fuma S."/>
            <person name="Galizzi A."/>
            <person name="Galleron N."/>
            <person name="Ghim S.-Y."/>
            <person name="Glaser P."/>
            <person name="Goffeau A."/>
            <person name="Golightly E.J."/>
            <person name="Grandi G."/>
            <person name="Guiseppi G."/>
            <person name="Guy B.J."/>
            <person name="Haga K."/>
            <person name="Haiech J."/>
            <person name="Harwood C.R."/>
            <person name="Henaut A."/>
            <person name="Hilbert H."/>
            <person name="Holsappel S."/>
            <person name="Hosono S."/>
            <person name="Hullo M.-F."/>
            <person name="Itaya M."/>
            <person name="Jones L.-M."/>
            <person name="Joris B."/>
            <person name="Karamata D."/>
            <person name="Kasahara Y."/>
            <person name="Klaerr-Blanchard M."/>
            <person name="Klein C."/>
            <person name="Kobayashi Y."/>
            <person name="Koetter P."/>
            <person name="Koningstein G."/>
            <person name="Krogh S."/>
            <person name="Kumano M."/>
            <person name="Kurita K."/>
            <person name="Lapidus A."/>
            <person name="Lardinois S."/>
            <person name="Lauber J."/>
            <person name="Lazarevic V."/>
            <person name="Lee S.-M."/>
            <person name="Levine A."/>
            <person name="Liu H."/>
            <person name="Masuda S."/>
            <person name="Mauel C."/>
            <person name="Medigue C."/>
            <person name="Medina N."/>
            <person name="Mellado R.P."/>
            <person name="Mizuno M."/>
            <person name="Moestl D."/>
            <person name="Nakai S."/>
            <person name="Noback M."/>
            <person name="Noone D."/>
            <person name="O'Reilly M."/>
            <person name="Ogawa K."/>
            <person name="Ogiwara A."/>
            <person name="Oudega B."/>
            <person name="Park S.-H."/>
            <person name="Parro V."/>
            <person name="Pohl T.M."/>
            <person name="Portetelle D."/>
            <person name="Porwollik S."/>
            <person name="Prescott A.M."/>
            <person name="Presecan E."/>
            <person name="Pujic P."/>
            <person name="Purnelle B."/>
            <person name="Rapoport G."/>
            <person name="Rey M."/>
            <person name="Reynolds S."/>
            <person name="Rieger M."/>
            <person name="Rivolta C."/>
            <person name="Rocha E."/>
            <person name="Roche B."/>
            <person name="Rose M."/>
            <person name="Sadaie Y."/>
            <person name="Sato T."/>
            <person name="Scanlan E."/>
            <person name="Schleich S."/>
            <person name="Schroeter R."/>
            <person name="Scoffone F."/>
            <person name="Sekiguchi J."/>
            <person name="Sekowska A."/>
            <person name="Seror S.J."/>
            <person name="Serror P."/>
            <person name="Shin B.-S."/>
            <person name="Soldo B."/>
            <person name="Sorokin A."/>
            <person name="Tacconi E."/>
            <person name="Takagi T."/>
            <person name="Takahashi H."/>
            <person name="Takemaru K."/>
            <person name="Takeuchi M."/>
            <person name="Tamakoshi A."/>
            <person name="Tanaka T."/>
            <person name="Terpstra P."/>
            <person name="Tognoni A."/>
            <person name="Tosato V."/>
            <person name="Uchiyama S."/>
            <person name="Vandenbol M."/>
            <person name="Vannier F."/>
            <person name="Vassarotti A."/>
            <person name="Viari A."/>
            <person name="Wambutt R."/>
            <person name="Wedler E."/>
            <person name="Wedler H."/>
            <person name="Weitzenegger T."/>
            <person name="Winters P."/>
            <person name="Wipat A."/>
            <person name="Yamamoto H."/>
            <person name="Yamane K."/>
            <person name="Yasumoto K."/>
            <person name="Yata K."/>
            <person name="Yoshida K."/>
            <person name="Yoshikawa H.-F."/>
            <person name="Zumstein E."/>
            <person name="Yoshikawa H."/>
            <person name="Danchin A."/>
        </authorList>
    </citation>
    <scope>NUCLEOTIDE SEQUENCE [LARGE SCALE GENOMIC DNA]</scope>
    <source>
        <strain>168</strain>
    </source>
</reference>
<reference key="3">
    <citation type="journal article" date="2019" name="J. Bacteriol.">
        <title>The melREDCA operon encodes a utilization system for the raffinose family of oligosaccharides in Bacillus subtilis.</title>
        <authorList>
            <person name="Morabbi Heravi K."/>
            <person name="Watzlawick H."/>
            <person name="Altenbuchner J."/>
        </authorList>
    </citation>
    <scope>FUNCTION</scope>
    <scope>DNA-BINDING</scope>
    <scope>SUBCELLULAR LOCATION</scope>
    <scope>INDUCTION</scope>
    <source>
        <strain>168 / KM0</strain>
    </source>
</reference>
<comment type="function">
    <text evidence="2">Represses the melibiose operon melREDCA in the absence of melibiose or raffinose. Binds to two binding sites at the promoter region of the operon.</text>
</comment>
<comment type="subcellular location">
    <subcellularLocation>
        <location evidence="5">Cytoplasm</location>
    </subcellularLocation>
</comment>
<comment type="induction">
    <text evidence="2">Negatively autoregulated. Induced by melibiose and raffinose.</text>
</comment>
<name>MELR_BACSU</name>
<organism>
    <name type="scientific">Bacillus subtilis (strain 168)</name>
    <dbReference type="NCBI Taxonomy" id="224308"/>
    <lineage>
        <taxon>Bacteria</taxon>
        <taxon>Bacillati</taxon>
        <taxon>Bacillota</taxon>
        <taxon>Bacilli</taxon>
        <taxon>Bacillales</taxon>
        <taxon>Bacillaceae</taxon>
        <taxon>Bacillus</taxon>
    </lineage>
</organism>
<sequence length="344" mass="38399">MVRIKDIALKAKVSSATVSRILNEDESLSVAGETRQRVINIAEELGYQTVAKRRKSRGQKQRAQPLIGVLSCLSPDQERQDPYFSSIRKGIEKECFEQEIFITNSIHLGSFQEHIFRELDGVIVIGRVHDEAVKHISGRLEHAVFINHSPDPQAYDSIGIDFESASRQAIDHLFDLGYKRLGYIGGQEKEHTLKDGQSIRRTIEDKRLTAFLESAAPQPEHVLIGEYSMREGYRLMKKAIDQGHLPEAFFIASDSMAIGALKALQEAGLQVPRDTAIVSFNGIEEAEFASTPLTTVKVYTEEMGRTGVKLLLDRLNGRTLPQHVTLPTTLIVRQSCGCTAKEVT</sequence>
<keyword id="KW-0963">Cytoplasm</keyword>
<keyword id="KW-0238">DNA-binding</keyword>
<keyword id="KW-1185">Reference proteome</keyword>
<keyword id="KW-0678">Repressor</keyword>
<keyword id="KW-0804">Transcription</keyword>
<keyword id="KW-0805">Transcription regulation</keyword>
<protein>
    <recommendedName>
        <fullName evidence="4">HTH-type transcriptional repressor MelR</fullName>
    </recommendedName>
</protein>
<gene>
    <name evidence="3" type="primary">melR</name>
    <name type="synonym">msmR</name>
    <name type="ordered locus">BSU30260</name>
</gene>
<dbReference type="EMBL" id="AF008220">
    <property type="protein sequence ID" value="AAC00387.1"/>
    <property type="molecule type" value="Genomic_DNA"/>
</dbReference>
<dbReference type="EMBL" id="AL009126">
    <property type="protein sequence ID" value="CAB15004.1"/>
    <property type="molecule type" value="Genomic_DNA"/>
</dbReference>
<dbReference type="PIR" id="A69661">
    <property type="entry name" value="A69661"/>
</dbReference>
<dbReference type="RefSeq" id="NP_390904.1">
    <property type="nucleotide sequence ID" value="NC_000964.3"/>
</dbReference>
<dbReference type="RefSeq" id="WP_004398480.1">
    <property type="nucleotide sequence ID" value="NZ_OZ025638.1"/>
</dbReference>
<dbReference type="SMR" id="O34829"/>
<dbReference type="FunCoup" id="O34829">
    <property type="interactions" value="26"/>
</dbReference>
<dbReference type="STRING" id="224308.BSU30260"/>
<dbReference type="jPOST" id="O34829"/>
<dbReference type="PaxDb" id="224308-BSU30260"/>
<dbReference type="EnsemblBacteria" id="CAB15004">
    <property type="protein sequence ID" value="CAB15004"/>
    <property type="gene ID" value="BSU_30260"/>
</dbReference>
<dbReference type="GeneID" id="937257"/>
<dbReference type="KEGG" id="bsu:BSU30260"/>
<dbReference type="PATRIC" id="fig|224308.179.peg.3282"/>
<dbReference type="eggNOG" id="COG1609">
    <property type="taxonomic scope" value="Bacteria"/>
</dbReference>
<dbReference type="InParanoid" id="O34829"/>
<dbReference type="OrthoDB" id="43195at2"/>
<dbReference type="PhylomeDB" id="O34829"/>
<dbReference type="BioCyc" id="BSUB:BSU30260-MONOMER"/>
<dbReference type="Proteomes" id="UP000001570">
    <property type="component" value="Chromosome"/>
</dbReference>
<dbReference type="GO" id="GO:0005737">
    <property type="term" value="C:cytoplasm"/>
    <property type="evidence" value="ECO:0007669"/>
    <property type="project" value="UniProtKB-SubCell"/>
</dbReference>
<dbReference type="GO" id="GO:0003700">
    <property type="term" value="F:DNA-binding transcription factor activity"/>
    <property type="evidence" value="ECO:0000318"/>
    <property type="project" value="GO_Central"/>
</dbReference>
<dbReference type="GO" id="GO:0000976">
    <property type="term" value="F:transcription cis-regulatory region binding"/>
    <property type="evidence" value="ECO:0000318"/>
    <property type="project" value="GO_Central"/>
</dbReference>
<dbReference type="GO" id="GO:0006355">
    <property type="term" value="P:regulation of DNA-templated transcription"/>
    <property type="evidence" value="ECO:0000318"/>
    <property type="project" value="GO_Central"/>
</dbReference>
<dbReference type="CDD" id="cd01392">
    <property type="entry name" value="HTH_LacI"/>
    <property type="match status" value="1"/>
</dbReference>
<dbReference type="CDD" id="cd01544">
    <property type="entry name" value="PBP1_GalR"/>
    <property type="match status" value="1"/>
</dbReference>
<dbReference type="Gene3D" id="3.40.50.2300">
    <property type="match status" value="2"/>
</dbReference>
<dbReference type="Gene3D" id="1.10.260.40">
    <property type="entry name" value="lambda repressor-like DNA-binding domains"/>
    <property type="match status" value="1"/>
</dbReference>
<dbReference type="InterPro" id="IPR000843">
    <property type="entry name" value="HTH_LacI"/>
</dbReference>
<dbReference type="InterPro" id="IPR046335">
    <property type="entry name" value="LacI/GalR-like_sensor"/>
</dbReference>
<dbReference type="InterPro" id="IPR010982">
    <property type="entry name" value="Lambda_DNA-bd_dom_sf"/>
</dbReference>
<dbReference type="InterPro" id="IPR028082">
    <property type="entry name" value="Peripla_BP_I"/>
</dbReference>
<dbReference type="PANTHER" id="PTHR30146:SF149">
    <property type="entry name" value="HTH-TYPE TRANSCRIPTIONAL REGULATOR EBGR"/>
    <property type="match status" value="1"/>
</dbReference>
<dbReference type="PANTHER" id="PTHR30146">
    <property type="entry name" value="LACI-RELATED TRANSCRIPTIONAL REPRESSOR"/>
    <property type="match status" value="1"/>
</dbReference>
<dbReference type="Pfam" id="PF00356">
    <property type="entry name" value="LacI"/>
    <property type="match status" value="1"/>
</dbReference>
<dbReference type="Pfam" id="PF13377">
    <property type="entry name" value="Peripla_BP_3"/>
    <property type="match status" value="1"/>
</dbReference>
<dbReference type="SMART" id="SM00354">
    <property type="entry name" value="HTH_LACI"/>
    <property type="match status" value="1"/>
</dbReference>
<dbReference type="SUPFAM" id="SSF47413">
    <property type="entry name" value="lambda repressor-like DNA-binding domains"/>
    <property type="match status" value="1"/>
</dbReference>
<dbReference type="SUPFAM" id="SSF53822">
    <property type="entry name" value="Periplasmic binding protein-like I"/>
    <property type="match status" value="1"/>
</dbReference>
<dbReference type="PROSITE" id="PS00356">
    <property type="entry name" value="HTH_LACI_1"/>
    <property type="match status" value="1"/>
</dbReference>
<dbReference type="PROSITE" id="PS50932">
    <property type="entry name" value="HTH_LACI_2"/>
    <property type="match status" value="1"/>
</dbReference>